<keyword id="KW-0002">3D-structure</keyword>
<keyword id="KW-0963">Cytoplasm</keyword>
<keyword id="KW-1015">Disulfide bond</keyword>
<keyword id="KW-0646">Protease inhibitor</keyword>
<keyword id="KW-1185">Reference proteome</keyword>
<keyword id="KW-0789">Thiol protease inhibitor</keyword>
<proteinExistence type="evidence at protein level"/>
<gene>
    <name evidence="5" type="primary">ICP1</name>
    <name type="synonym">AMS</name>
    <name evidence="9" type="ORF">EHI_159600</name>
</gene>
<name>ICP1_ENTH1</name>
<evidence type="ECO:0000269" key="1">
    <source>
    </source>
</evidence>
<evidence type="ECO:0000269" key="2">
    <source>
    </source>
</evidence>
<evidence type="ECO:0000269" key="3">
    <source>
    </source>
</evidence>
<evidence type="ECO:0000269" key="4">
    <source>
    </source>
</evidence>
<evidence type="ECO:0000303" key="5">
    <source>
    </source>
</evidence>
<evidence type="ECO:0000305" key="6"/>
<evidence type="ECO:0000305" key="7">
    <source>
    </source>
</evidence>
<evidence type="ECO:0000312" key="8">
    <source>
        <dbReference type="EMBL" id="CAG23944.1"/>
    </source>
</evidence>
<evidence type="ECO:0000312" key="9">
    <source>
        <dbReference type="EMBL" id="EAL47869.1"/>
    </source>
</evidence>
<evidence type="ECO:0007744" key="10">
    <source>
        <dbReference type="PDB" id="6CJZ"/>
    </source>
</evidence>
<evidence type="ECO:0007829" key="11">
    <source>
        <dbReference type="PDB" id="6CJZ"/>
    </source>
</evidence>
<feature type="chain" id="PRO_0000218292" description="Amoebiasin-1">
    <location>
        <begin position="1"/>
        <end position="102"/>
    </location>
</feature>
<feature type="short sequence motif" description="BC loop" evidence="4">
    <location>
        <begin position="27"/>
        <end position="32"/>
    </location>
</feature>
<feature type="short sequence motif" description="DE loop" evidence="4">
    <location>
        <begin position="51"/>
        <end position="61"/>
    </location>
</feature>
<feature type="short sequence motif" description="FG loop" evidence="4">
    <location>
        <begin position="85"/>
        <end position="93"/>
    </location>
</feature>
<feature type="site" description="Important for the redox regulation of cysteine protease inhibitory activity possibly by regulating oligomeric state" evidence="4">
    <location>
        <position position="39"/>
    </location>
</feature>
<feature type="site" description="Important for the redox regulation of cysteine protease inhibitory activity possibly by regulating oligomeric state" evidence="4">
    <location>
        <position position="58"/>
    </location>
</feature>
<feature type="site" description="Important for the redox regulation of cysteine protease inhibitory activity possibly by regulating oligomeric state" evidence="4">
    <location>
        <position position="60"/>
    </location>
</feature>
<feature type="mutagenesis site" description="Increases inhibitory activity towards model target papain." evidence="4">
    <original>T</original>
    <variation>S</variation>
    <location>
        <position position="29"/>
    </location>
</feature>
<feature type="mutagenesis site" description="Increases inhibitory activity towards model target papain; when associated with S-60 or with S-58 and S-60." evidence="4">
    <original>C</original>
    <variation>S</variation>
    <location>
        <position position="39"/>
    </location>
</feature>
<feature type="mutagenesis site" description="Monomeric in the presence of reducing agents while in non-reducing conditions, forms only homodimers and mot multimers; when associated with S-60. Increases inhibitory activity towards model target papain; when associated with S-60 or with S-39 and S-60." evidence="4">
    <original>C</original>
    <variation>S</variation>
    <location>
        <position position="58"/>
    </location>
</feature>
<feature type="mutagenesis site" description="Monomeric in the presence of reducing agents while in non-reducing conditions, forms only homodimers; when associated with S-60. Increases inhibitory activity towards model target papain; when associated with S-58 or with S-39 and S-58." evidence="4">
    <original>C</original>
    <variation>S</variation>
    <location>
        <position position="60"/>
    </location>
</feature>
<feature type="helix" evidence="11">
    <location>
        <begin position="5"/>
        <end position="7"/>
    </location>
</feature>
<feature type="strand" evidence="11">
    <location>
        <begin position="10"/>
        <end position="14"/>
    </location>
</feature>
<feature type="strand" evidence="11">
    <location>
        <begin position="19"/>
        <end position="25"/>
    </location>
</feature>
<feature type="turn" evidence="11">
    <location>
        <begin position="28"/>
        <end position="30"/>
    </location>
</feature>
<feature type="strand" evidence="11">
    <location>
        <begin position="33"/>
        <end position="38"/>
    </location>
</feature>
<feature type="strand" evidence="11">
    <location>
        <begin position="43"/>
        <end position="49"/>
    </location>
</feature>
<feature type="strand" evidence="11">
    <location>
        <begin position="63"/>
        <end position="69"/>
    </location>
</feature>
<feature type="strand" evidence="11">
    <location>
        <begin position="72"/>
        <end position="84"/>
    </location>
</feature>
<feature type="strand" evidence="11">
    <location>
        <begin position="93"/>
        <end position="101"/>
    </location>
</feature>
<sequence length="102" mass="11123">MSLTEDNNNTTITIAKGENKEIILHGNPTTGYSWVVDSCEGLSNTVEYVADQHAPGICGCGGKYHIKITGTQTGEGKIVLVYRRPWAPNANDRTFTLKVNVQ</sequence>
<comment type="function">
    <text evidence="1 2 3 4 7">Cysteine protease inhibitor (PubMed:15757643, PubMed:16979632, PubMed:21440496, PubMed:32731033). Inhibits cysteine proteases CP1, CP2 and CP5 (PubMed:16979632). May protect the cytosol against cysteine proteases released by damaged intracellular vesicles (Probable).</text>
</comment>
<comment type="subunit">
    <text evidence="2 4">Monomer (PubMed:16979632, PubMed:32731033). During oxidative conditions, forms homooligomers; disulfide-linked (PubMed:32731033). Interacts with cysteine protease CP2 (PubMed:16979632). Interacts with cysteine protease CP5 (PubMed:16979632).</text>
</comment>
<comment type="subcellular location">
    <subcellularLocation>
        <location evidence="1 2 3">Cytoplasm</location>
    </subcellularLocation>
</comment>
<comment type="developmental stage">
    <text evidence="1 2 3">Expressed at low levels in trophozoites (at protein level).</text>
</comment>
<comment type="domain">
    <text evidence="4">The BC, DE and FG loops form a tripartite wedge that blocks the substrate-binding site of target cysteine proteases (PubMed:32731033). The BC loop interacts with the catalytically active cysteine and histidine residues of the protease catalytic center (PubMed:32731033).</text>
</comment>
<comment type="PTM">
    <text evidence="4">During oxidative conditions, cys-39, cys-58 and cys-60 react to form intra- and inter-molecular disulfide bonds resulting in the loss of the protein inhibitory activity.</text>
</comment>
<comment type="disruption phenotype">
    <text evidence="3">RNAi-mediated knockdown causes an increase in peptidolytic activity.</text>
</comment>
<comment type="similarity">
    <text evidence="6">Belongs to the protease inhibitor I42 family.</text>
</comment>
<organism evidence="9">
    <name type="scientific">Entamoeba histolytica (strain ATCC 30459 / HM-1:IMSS / ABRM)</name>
    <dbReference type="NCBI Taxonomy" id="294381"/>
    <lineage>
        <taxon>Eukaryota</taxon>
        <taxon>Amoebozoa</taxon>
        <taxon>Evosea</taxon>
        <taxon>Archamoebae</taxon>
        <taxon>Mastigamoebida</taxon>
        <taxon>Entamoebidae</taxon>
        <taxon>Entamoeba</taxon>
    </lineage>
</organism>
<dbReference type="EMBL" id="AJ634054">
    <property type="protein sequence ID" value="CAG23944.1"/>
    <property type="molecule type" value="Genomic_DNA"/>
</dbReference>
<dbReference type="EMBL" id="DS571167">
    <property type="protein sequence ID" value="EAL47869.1"/>
    <property type="molecule type" value="Genomic_DNA"/>
</dbReference>
<dbReference type="RefSeq" id="XP_653255.1">
    <property type="nucleotide sequence ID" value="XM_648163.1"/>
</dbReference>
<dbReference type="PDB" id="6CJZ">
    <property type="method" value="NMR"/>
    <property type="chains" value="A=1-102"/>
</dbReference>
<dbReference type="PDBsum" id="6CJZ"/>
<dbReference type="BMRB" id="Q6KCA4"/>
<dbReference type="SMR" id="Q6KCA4"/>
<dbReference type="MINT" id="Q6KCA4"/>
<dbReference type="MEROPS" id="I42.002"/>
<dbReference type="EnsemblProtists" id="GAT93295">
    <property type="protein sequence ID" value="GAT93295"/>
    <property type="gene ID" value="CL6EHI_159600"/>
</dbReference>
<dbReference type="EnsemblProtists" id="rna_EHI_159600-1">
    <property type="protein sequence ID" value="rna_EHI_159600-1"/>
    <property type="gene ID" value="EHI_159600"/>
</dbReference>
<dbReference type="GeneID" id="3407563"/>
<dbReference type="KEGG" id="ehi:EHI_159600"/>
<dbReference type="VEuPathDB" id="AmoebaDB:EHI5A_081670"/>
<dbReference type="VEuPathDB" id="AmoebaDB:EHI7A_046650"/>
<dbReference type="VEuPathDB" id="AmoebaDB:EHI8A_045830"/>
<dbReference type="VEuPathDB" id="AmoebaDB:EHI_159600"/>
<dbReference type="VEuPathDB" id="AmoebaDB:KM1_093770"/>
<dbReference type="eggNOG" id="ENOG502SEPD">
    <property type="taxonomic scope" value="Eukaryota"/>
</dbReference>
<dbReference type="HOGENOM" id="CLU_102057_0_1_1"/>
<dbReference type="OMA" id="TGYMWTR"/>
<dbReference type="OrthoDB" id="24923at2759"/>
<dbReference type="Proteomes" id="UP000001926">
    <property type="component" value="Partially assembled WGS sequence"/>
</dbReference>
<dbReference type="GO" id="GO:0005737">
    <property type="term" value="C:cytoplasm"/>
    <property type="evidence" value="ECO:0000314"/>
    <property type="project" value="UniProtKB"/>
</dbReference>
<dbReference type="GO" id="GO:0004869">
    <property type="term" value="F:cysteine-type endopeptidase inhibitor activity"/>
    <property type="evidence" value="ECO:0000314"/>
    <property type="project" value="UniProtKB"/>
</dbReference>
<dbReference type="GO" id="GO:0019899">
    <property type="term" value="F:enzyme binding"/>
    <property type="evidence" value="ECO:0000353"/>
    <property type="project" value="UniProtKB"/>
</dbReference>
<dbReference type="Gene3D" id="2.60.40.2020">
    <property type="match status" value="1"/>
</dbReference>
<dbReference type="InterPro" id="IPR036331">
    <property type="entry name" value="Chagasin-like_sf"/>
</dbReference>
<dbReference type="InterPro" id="IPR052781">
    <property type="entry name" value="Cys_protease_inhibitor_I42"/>
</dbReference>
<dbReference type="InterPro" id="IPR018990">
    <property type="entry name" value="Prot_inh_I42_chagasin"/>
</dbReference>
<dbReference type="PANTHER" id="PTHR36530:SF1">
    <property type="entry name" value="AMOEBIASIN-1"/>
    <property type="match status" value="1"/>
</dbReference>
<dbReference type="PANTHER" id="PTHR36530">
    <property type="entry name" value="INHIBITOR OF CYSTEINE PEPTIDASE"/>
    <property type="match status" value="1"/>
</dbReference>
<dbReference type="Pfam" id="PF09394">
    <property type="entry name" value="Inhibitor_I42"/>
    <property type="match status" value="1"/>
</dbReference>
<dbReference type="SUPFAM" id="SSF141066">
    <property type="entry name" value="ICP-like"/>
    <property type="match status" value="1"/>
</dbReference>
<accession>Q6KCA4</accession>
<accession>A0A175JI93</accession>
<accession>C4LX40</accession>
<reference evidence="8" key="1">
    <citation type="journal article" date="2005" name="FEBS Lett.">
        <title>Identification of EhICP1, a chagasin-like cysteine protease inhibitor of Entamoeba histolytica.</title>
        <authorList>
            <person name="Riekenberg S."/>
            <person name="Witjes B."/>
            <person name="Saric M."/>
            <person name="Bruchhaus I."/>
            <person name="Scholze H."/>
        </authorList>
    </citation>
    <scope>NUCLEOTIDE SEQUENCE [GENOMIC DNA]</scope>
    <scope>FUNCTION</scope>
    <scope>SUBCELLULAR LOCATION</scope>
    <scope>DEVELOPMENTAL STAGE</scope>
    <source>
        <strain evidence="8">ATCC 30459 / HM-1:IMSS / ABRM</strain>
    </source>
</reference>
<reference evidence="9" key="2">
    <citation type="journal article" date="2005" name="Nature">
        <title>The genome of the protist parasite Entamoeba histolytica.</title>
        <authorList>
            <person name="Loftus B.J."/>
            <person name="Anderson I."/>
            <person name="Davies R."/>
            <person name="Alsmark U.C."/>
            <person name="Samuelson J."/>
            <person name="Amedeo P."/>
            <person name="Roncaglia P."/>
            <person name="Berriman M."/>
            <person name="Hirt R.P."/>
            <person name="Mann B.J."/>
            <person name="Nozaki T."/>
            <person name="Suh B."/>
            <person name="Pop M."/>
            <person name="Duchene M."/>
            <person name="Ackers J."/>
            <person name="Tannich E."/>
            <person name="Leippe M."/>
            <person name="Hofer M."/>
            <person name="Bruchhaus I."/>
            <person name="Willhoeft U."/>
            <person name="Bhattacharya A."/>
            <person name="Chillingworth T."/>
            <person name="Churcher C.M."/>
            <person name="Hance Z."/>
            <person name="Harris B."/>
            <person name="Harris D."/>
            <person name="Jagels K."/>
            <person name="Moule S."/>
            <person name="Mungall K.L."/>
            <person name="Ormond D."/>
            <person name="Squares R."/>
            <person name="Whitehead S."/>
            <person name="Quail M.A."/>
            <person name="Rabbinowitsch E."/>
            <person name="Norbertczak H."/>
            <person name="Price C."/>
            <person name="Wang Z."/>
            <person name="Guillen N."/>
            <person name="Gilchrist C."/>
            <person name="Stroup S.E."/>
            <person name="Bhattacharya S."/>
            <person name="Lohia A."/>
            <person name="Foster P.G."/>
            <person name="Sicheritz-Ponten T."/>
            <person name="Weber C."/>
            <person name="Singh U."/>
            <person name="Mukherjee C."/>
            <person name="El-Sayed N.M.A."/>
            <person name="Petri W.A."/>
            <person name="Clark C.G."/>
            <person name="Embley T.M."/>
            <person name="Barrell B.G."/>
            <person name="Fraser C.M."/>
            <person name="Hall N."/>
        </authorList>
    </citation>
    <scope>NUCLEOTIDE SEQUENCE [LARGE SCALE GENOMIC DNA]</scope>
    <source>
        <strain evidence="9">ATCC 30459 / HM-1:IMSS / ABRM</strain>
    </source>
</reference>
<reference key="3">
    <citation type="journal article" date="2006" name="FEBS Lett.">
        <title>Two cysteine protease inhibitors, EhICP1 and 2, localized in distinct compartments, negatively regulate secretion in Entamoeba histolytica.</title>
        <authorList>
            <person name="Sato D."/>
            <person name="Nakada-Tsukui K."/>
            <person name="Okada M."/>
            <person name="Nozaki T."/>
        </authorList>
    </citation>
    <scope>FUNCTION</scope>
    <scope>SUBUNIT</scope>
    <scope>INTERACTION WITH CP2 AND CP5</scope>
    <scope>SUBCELLULAR LOCATION</scope>
    <scope>DEVELOPMENTAL STAGE</scope>
</reference>
<reference key="4">
    <citation type="journal article" date="2012" name="Protist">
        <title>The cysteine protease inhibitors EhICP1 and EhICP2 perform different tasks in the regulation of endogenous protease activity in trophozoites of Entamoeba histolytica.</title>
        <authorList>
            <person name="Saric M."/>
            <person name="Irmer H."/>
            <person name="Eckert D."/>
            <person name="Baer A.K."/>
            <person name="Bruchhaus I."/>
            <person name="Scholze H."/>
        </authorList>
    </citation>
    <scope>FUNCTION</scope>
    <scope>SUBCELLULAR LOCATION</scope>
    <scope>DEVELOPMENTAL STAGE</scope>
    <scope>DISRUPTION PHENOTYPE</scope>
</reference>
<reference evidence="10" key="5">
    <citation type="journal article" date="2020" name="Biochim. Biophys. Acta">
        <title>Solution structure of the inhibitor of cysteine proteases 1 from Entamoeba histolytica reveals a possible auto regulatory mechanism.</title>
        <authorList>
            <person name="Flores-Solis D."/>
            <person name="Mendoza A."/>
            <person name="Renteria-Gonzalez I."/>
            <person name="Casados-Vazquez L.E."/>
            <person name="Trasvina-Arenas C.H."/>
            <person name="Jimenez-Sandoval P."/>
            <person name="Benitez-Cardoza C.G."/>
            <person name="Del Rio-Portilla F."/>
            <person name="Brieba L.G."/>
        </authorList>
    </citation>
    <scope>STRUCTURE BY NMR OF MUTANT SER-39; SER-58 AND SER-60</scope>
    <scope>FUNCTION</scope>
    <scope>SUBUNIT</scope>
    <scope>MOTIF</scope>
    <scope>DISULFIDE BONDS</scope>
    <scope>MUTAGENESIS OF THR-29; CYS-39; CYS-58 AND CYS-60</scope>
</reference>
<protein>
    <recommendedName>
        <fullName>Amoebiasin-1</fullName>
    </recommendedName>
    <alternativeName>
        <fullName evidence="5">Cysteine protease inhibitor 1</fullName>
    </alternativeName>
    <alternativeName>
        <fullName evidence="5">EhICP1</fullName>
        <shortName>ICP-1</shortName>
    </alternativeName>
</protein>